<proteinExistence type="inferred from homology"/>
<reference key="1">
    <citation type="submission" date="2008-06" db="EMBL/GenBank/DDBJ databases">
        <title>Complete sequence of Chlorobium phaeobacteroides BS1.</title>
        <authorList>
            <consortium name="US DOE Joint Genome Institute"/>
            <person name="Lucas S."/>
            <person name="Copeland A."/>
            <person name="Lapidus A."/>
            <person name="Glavina del Rio T."/>
            <person name="Dalin E."/>
            <person name="Tice H."/>
            <person name="Bruce D."/>
            <person name="Goodwin L."/>
            <person name="Pitluck S."/>
            <person name="Schmutz J."/>
            <person name="Larimer F."/>
            <person name="Land M."/>
            <person name="Hauser L."/>
            <person name="Kyrpides N."/>
            <person name="Ovchinnikova G."/>
            <person name="Li T."/>
            <person name="Liu Z."/>
            <person name="Zhao F."/>
            <person name="Overmann J."/>
            <person name="Bryant D.A."/>
            <person name="Richardson P."/>
        </authorList>
    </citation>
    <scope>NUCLEOTIDE SEQUENCE [LARGE SCALE GENOMIC DNA]</scope>
    <source>
        <strain>BS1</strain>
    </source>
</reference>
<evidence type="ECO:0000255" key="1">
    <source>
        <dbReference type="HAMAP-Rule" id="MF_01007"/>
    </source>
</evidence>
<accession>B3EQC6</accession>
<sequence length="332" mass="36809">MGKAAYHLPVMVREVVAWLVRRAGIYVDGTLGGGGHSLAILRALRDKGLEKGSFLIGIDQDSFAIAEAERTLASFRERTRLVQGNFREIADIVSTLRENQLRGMEVAGILLDLGVSSFQIDTSERGFSYLRSGPLDMRMEPDEGQSAADIVNTFEERELADIFFRFGEEKKSRRIASAICSWRNERGVIRGTQDLAAIVRSVVSVPDQQIKSLSRIFQALRIAVNDELGALESALKEGAASLSPQGRMAVMSYHSIEDRMVKHYFRTLAADDWGPKGVALREPLHKAAFTLVTRKALIAGDDEVNENSRARSAKMRVIERKMYSGEVSESDS</sequence>
<name>RSMH_CHLPB</name>
<comment type="function">
    <text evidence="1">Specifically methylates the N4 position of cytidine in position 1402 (C1402) of 16S rRNA.</text>
</comment>
<comment type="catalytic activity">
    <reaction evidence="1">
        <text>cytidine(1402) in 16S rRNA + S-adenosyl-L-methionine = N(4)-methylcytidine(1402) in 16S rRNA + S-adenosyl-L-homocysteine + H(+)</text>
        <dbReference type="Rhea" id="RHEA:42928"/>
        <dbReference type="Rhea" id="RHEA-COMP:10286"/>
        <dbReference type="Rhea" id="RHEA-COMP:10287"/>
        <dbReference type="ChEBI" id="CHEBI:15378"/>
        <dbReference type="ChEBI" id="CHEBI:57856"/>
        <dbReference type="ChEBI" id="CHEBI:59789"/>
        <dbReference type="ChEBI" id="CHEBI:74506"/>
        <dbReference type="ChEBI" id="CHEBI:82748"/>
        <dbReference type="EC" id="2.1.1.199"/>
    </reaction>
</comment>
<comment type="subcellular location">
    <subcellularLocation>
        <location evidence="1">Cytoplasm</location>
    </subcellularLocation>
</comment>
<comment type="similarity">
    <text evidence="1">Belongs to the methyltransferase superfamily. RsmH family.</text>
</comment>
<feature type="chain" id="PRO_0000386799" description="Ribosomal RNA small subunit methyltransferase H">
    <location>
        <begin position="1"/>
        <end position="332"/>
    </location>
</feature>
<feature type="binding site" evidence="1">
    <location>
        <begin position="34"/>
        <end position="36"/>
    </location>
    <ligand>
        <name>S-adenosyl-L-methionine</name>
        <dbReference type="ChEBI" id="CHEBI:59789"/>
    </ligand>
</feature>
<feature type="binding site" evidence="1">
    <location>
        <position position="59"/>
    </location>
    <ligand>
        <name>S-adenosyl-L-methionine</name>
        <dbReference type="ChEBI" id="CHEBI:59789"/>
    </ligand>
</feature>
<feature type="binding site" evidence="1">
    <location>
        <position position="86"/>
    </location>
    <ligand>
        <name>S-adenosyl-L-methionine</name>
        <dbReference type="ChEBI" id="CHEBI:59789"/>
    </ligand>
</feature>
<feature type="binding site" evidence="1">
    <location>
        <position position="112"/>
    </location>
    <ligand>
        <name>S-adenosyl-L-methionine</name>
        <dbReference type="ChEBI" id="CHEBI:59789"/>
    </ligand>
</feature>
<feature type="binding site" evidence="1">
    <location>
        <position position="119"/>
    </location>
    <ligand>
        <name>S-adenosyl-L-methionine</name>
        <dbReference type="ChEBI" id="CHEBI:59789"/>
    </ligand>
</feature>
<organism>
    <name type="scientific">Chlorobium phaeobacteroides (strain BS1)</name>
    <dbReference type="NCBI Taxonomy" id="331678"/>
    <lineage>
        <taxon>Bacteria</taxon>
        <taxon>Pseudomonadati</taxon>
        <taxon>Chlorobiota</taxon>
        <taxon>Chlorobiia</taxon>
        <taxon>Chlorobiales</taxon>
        <taxon>Chlorobiaceae</taxon>
        <taxon>Chlorobium/Pelodictyon group</taxon>
        <taxon>Chlorobium</taxon>
    </lineage>
</organism>
<gene>
    <name evidence="1" type="primary">rsmH</name>
    <name type="synonym">mraW</name>
    <name type="ordered locus">Cphamn1_2530</name>
</gene>
<protein>
    <recommendedName>
        <fullName evidence="1">Ribosomal RNA small subunit methyltransferase H</fullName>
        <ecNumber evidence="1">2.1.1.199</ecNumber>
    </recommendedName>
    <alternativeName>
        <fullName evidence="1">16S rRNA m(4)C1402 methyltransferase</fullName>
    </alternativeName>
    <alternativeName>
        <fullName evidence="1">rRNA (cytosine-N(4)-)-methyltransferase RsmH</fullName>
    </alternativeName>
</protein>
<dbReference type="EC" id="2.1.1.199" evidence="1"/>
<dbReference type="EMBL" id="CP001101">
    <property type="protein sequence ID" value="ACE05424.1"/>
    <property type="molecule type" value="Genomic_DNA"/>
</dbReference>
<dbReference type="SMR" id="B3EQC6"/>
<dbReference type="STRING" id="331678.Cphamn1_2530"/>
<dbReference type="KEGG" id="cpb:Cphamn1_2530"/>
<dbReference type="eggNOG" id="COG0275">
    <property type="taxonomic scope" value="Bacteria"/>
</dbReference>
<dbReference type="HOGENOM" id="CLU_038422_1_1_10"/>
<dbReference type="OrthoDB" id="9806637at2"/>
<dbReference type="GO" id="GO:0005737">
    <property type="term" value="C:cytoplasm"/>
    <property type="evidence" value="ECO:0007669"/>
    <property type="project" value="UniProtKB-SubCell"/>
</dbReference>
<dbReference type="GO" id="GO:0071424">
    <property type="term" value="F:rRNA (cytosine-N4-)-methyltransferase activity"/>
    <property type="evidence" value="ECO:0007669"/>
    <property type="project" value="UniProtKB-UniRule"/>
</dbReference>
<dbReference type="GO" id="GO:0070475">
    <property type="term" value="P:rRNA base methylation"/>
    <property type="evidence" value="ECO:0007669"/>
    <property type="project" value="UniProtKB-UniRule"/>
</dbReference>
<dbReference type="Gene3D" id="1.10.150.170">
    <property type="entry name" value="Putative methyltransferase TM0872, insert domain"/>
    <property type="match status" value="1"/>
</dbReference>
<dbReference type="Gene3D" id="3.40.50.150">
    <property type="entry name" value="Vaccinia Virus protein VP39"/>
    <property type="match status" value="1"/>
</dbReference>
<dbReference type="HAMAP" id="MF_01007">
    <property type="entry name" value="16SrRNA_methyltr_H"/>
    <property type="match status" value="1"/>
</dbReference>
<dbReference type="InterPro" id="IPR002903">
    <property type="entry name" value="RsmH"/>
</dbReference>
<dbReference type="InterPro" id="IPR023397">
    <property type="entry name" value="SAM-dep_MeTrfase_MraW_recog"/>
</dbReference>
<dbReference type="InterPro" id="IPR029063">
    <property type="entry name" value="SAM-dependent_MTases_sf"/>
</dbReference>
<dbReference type="NCBIfam" id="TIGR00006">
    <property type="entry name" value="16S rRNA (cytosine(1402)-N(4))-methyltransferase RsmH"/>
    <property type="match status" value="1"/>
</dbReference>
<dbReference type="PANTHER" id="PTHR11265:SF0">
    <property type="entry name" value="12S RRNA N4-METHYLCYTIDINE METHYLTRANSFERASE"/>
    <property type="match status" value="1"/>
</dbReference>
<dbReference type="PANTHER" id="PTHR11265">
    <property type="entry name" value="S-ADENOSYL-METHYLTRANSFERASE MRAW"/>
    <property type="match status" value="1"/>
</dbReference>
<dbReference type="Pfam" id="PF01795">
    <property type="entry name" value="Methyltransf_5"/>
    <property type="match status" value="1"/>
</dbReference>
<dbReference type="PIRSF" id="PIRSF004486">
    <property type="entry name" value="MraW"/>
    <property type="match status" value="1"/>
</dbReference>
<dbReference type="SUPFAM" id="SSF81799">
    <property type="entry name" value="Putative methyltransferase TM0872, insert domain"/>
    <property type="match status" value="1"/>
</dbReference>
<dbReference type="SUPFAM" id="SSF53335">
    <property type="entry name" value="S-adenosyl-L-methionine-dependent methyltransferases"/>
    <property type="match status" value="1"/>
</dbReference>
<keyword id="KW-0963">Cytoplasm</keyword>
<keyword id="KW-0489">Methyltransferase</keyword>
<keyword id="KW-0698">rRNA processing</keyword>
<keyword id="KW-0949">S-adenosyl-L-methionine</keyword>
<keyword id="KW-0808">Transferase</keyword>